<organism>
    <name type="scientific">Treponema pallidum (strain Nichols)</name>
    <dbReference type="NCBI Taxonomy" id="243276"/>
    <lineage>
        <taxon>Bacteria</taxon>
        <taxon>Pseudomonadati</taxon>
        <taxon>Spirochaetota</taxon>
        <taxon>Spirochaetia</taxon>
        <taxon>Spirochaetales</taxon>
        <taxon>Treponemataceae</taxon>
        <taxon>Treponema</taxon>
    </lineage>
</organism>
<dbReference type="EMBL" id="AE000520">
    <property type="protein sequence ID" value="AAC65599.1"/>
    <property type="molecule type" value="Genomic_DNA"/>
</dbReference>
<dbReference type="PIR" id="D71302">
    <property type="entry name" value="D71302"/>
</dbReference>
<dbReference type="RefSeq" id="WP_010882073.1">
    <property type="nucleotide sequence ID" value="NC_021490.2"/>
</dbReference>
<dbReference type="SMR" id="O83635"/>
<dbReference type="IntAct" id="O83635">
    <property type="interactions" value="2"/>
</dbReference>
<dbReference type="STRING" id="243276.TP_0627"/>
<dbReference type="EnsemblBacteria" id="AAC65599">
    <property type="protein sequence ID" value="AAC65599"/>
    <property type="gene ID" value="TP_0627"/>
</dbReference>
<dbReference type="GeneID" id="93876394"/>
<dbReference type="KEGG" id="tpa:TP_0627"/>
<dbReference type="KEGG" id="tpw:TPANIC_0627"/>
<dbReference type="eggNOG" id="COG0419">
    <property type="taxonomic scope" value="Bacteria"/>
</dbReference>
<dbReference type="HOGENOM" id="CLU_004785_2_1_12"/>
<dbReference type="OrthoDB" id="9795626at2"/>
<dbReference type="Proteomes" id="UP000000811">
    <property type="component" value="Chromosome"/>
</dbReference>
<dbReference type="GO" id="GO:0005524">
    <property type="term" value="F:ATP binding"/>
    <property type="evidence" value="ECO:0007669"/>
    <property type="project" value="UniProtKB-KW"/>
</dbReference>
<dbReference type="GO" id="GO:0016887">
    <property type="term" value="F:ATP hydrolysis activity"/>
    <property type="evidence" value="ECO:0007669"/>
    <property type="project" value="InterPro"/>
</dbReference>
<dbReference type="GO" id="GO:0004519">
    <property type="term" value="F:endonuclease activity"/>
    <property type="evidence" value="ECO:0007669"/>
    <property type="project" value="UniProtKB-KW"/>
</dbReference>
<dbReference type="GO" id="GO:0004527">
    <property type="term" value="F:exonuclease activity"/>
    <property type="evidence" value="ECO:0007669"/>
    <property type="project" value="UniProtKB-KW"/>
</dbReference>
<dbReference type="GO" id="GO:0006310">
    <property type="term" value="P:DNA recombination"/>
    <property type="evidence" value="ECO:0007669"/>
    <property type="project" value="UniProtKB-KW"/>
</dbReference>
<dbReference type="GO" id="GO:0006260">
    <property type="term" value="P:DNA replication"/>
    <property type="evidence" value="ECO:0007669"/>
    <property type="project" value="UniProtKB-KW"/>
</dbReference>
<dbReference type="GO" id="GO:0006302">
    <property type="term" value="P:double-strand break repair"/>
    <property type="evidence" value="ECO:0007669"/>
    <property type="project" value="InterPro"/>
</dbReference>
<dbReference type="Gene3D" id="3.40.50.300">
    <property type="entry name" value="P-loop containing nucleotide triphosphate hydrolases"/>
    <property type="match status" value="2"/>
</dbReference>
<dbReference type="InterPro" id="IPR027417">
    <property type="entry name" value="P-loop_NTPase"/>
</dbReference>
<dbReference type="InterPro" id="IPR038729">
    <property type="entry name" value="Rad50/SbcC_AAA"/>
</dbReference>
<dbReference type="InterPro" id="IPR004592">
    <property type="entry name" value="SbcC_gammaproteobac_type"/>
</dbReference>
<dbReference type="NCBIfam" id="TIGR00618">
    <property type="entry name" value="sbcc"/>
    <property type="match status" value="1"/>
</dbReference>
<dbReference type="PANTHER" id="PTHR32114">
    <property type="entry name" value="ABC TRANSPORTER ABCH.3"/>
    <property type="match status" value="1"/>
</dbReference>
<dbReference type="PANTHER" id="PTHR32114:SF2">
    <property type="entry name" value="ABC TRANSPORTER ABCH.3"/>
    <property type="match status" value="1"/>
</dbReference>
<dbReference type="Pfam" id="PF13476">
    <property type="entry name" value="AAA_23"/>
    <property type="match status" value="1"/>
</dbReference>
<dbReference type="Pfam" id="PF13558">
    <property type="entry name" value="SbcC_Walker_B"/>
    <property type="match status" value="1"/>
</dbReference>
<dbReference type="SUPFAM" id="SSF52540">
    <property type="entry name" value="P-loop containing nucleoside triphosphate hydrolases"/>
    <property type="match status" value="1"/>
</dbReference>
<feature type="chain" id="PRO_0000105868" description="Nuclease SbcCD subunit C">
    <location>
        <begin position="1"/>
        <end position="1047"/>
    </location>
</feature>
<feature type="coiled-coil region" evidence="2">
    <location>
        <begin position="178"/>
        <end position="276"/>
    </location>
</feature>
<feature type="coiled-coil region" evidence="2">
    <location>
        <begin position="305"/>
        <end position="332"/>
    </location>
</feature>
<feature type="coiled-coil region" evidence="2">
    <location>
        <begin position="382"/>
        <end position="410"/>
    </location>
</feature>
<feature type="coiled-coil region" evidence="2">
    <location>
        <begin position="521"/>
        <end position="547"/>
    </location>
</feature>
<feature type="coiled-coil region" evidence="2">
    <location>
        <begin position="624"/>
        <end position="667"/>
    </location>
</feature>
<feature type="coiled-coil region" evidence="2">
    <location>
        <begin position="698"/>
        <end position="729"/>
    </location>
</feature>
<feature type="binding site" evidence="2">
    <location>
        <begin position="33"/>
        <end position="40"/>
    </location>
    <ligand>
        <name>ATP</name>
        <dbReference type="ChEBI" id="CHEBI:30616"/>
    </ligand>
</feature>
<name>SBCC_TREPA</name>
<protein>
    <recommendedName>
        <fullName>Nuclease SbcCD subunit C</fullName>
    </recommendedName>
</protein>
<proteinExistence type="inferred from homology"/>
<keyword id="KW-0067">ATP-binding</keyword>
<keyword id="KW-0175">Coiled coil</keyword>
<keyword id="KW-0233">DNA recombination</keyword>
<keyword id="KW-0235">DNA replication</keyword>
<keyword id="KW-0255">Endonuclease</keyword>
<keyword id="KW-0269">Exonuclease</keyword>
<keyword id="KW-0378">Hydrolase</keyword>
<keyword id="KW-0540">Nuclease</keyword>
<keyword id="KW-0547">Nucleotide-binding</keyword>
<keyword id="KW-1185">Reference proteome</keyword>
<sequence length="1047" mass="118647">MKPMRLTLHNIGPFVGTHTVDFTALGPIFLVCGKTGSGKTTLFDAIAYALYGKPLGTRAEVIRSLRSHYAAPSEAAFATLEFSLGTKIYRVHRTLTCTLSHRKTEQPEQLYLEQKKGHGWERIACAHKSETECVIHDLLKLNSKEFERVVMLPQGECAQFLKANSKEKKETLMNLFPVDQYTALMERAKKKSLHAKAVLETLRSQLETLCAECMPDTYHERKQTLEAELQHARDALQQTRISHAYYTQKREALEAQLKKQQLCKELRARIETYRAQEPVHAETQKRIDRARKAAPLAAHIKHVTQCEQDAQRIHAEIQEKMRSREQLLMKRAAHVAQQSSIEEQRRLLQTLHSACIHIEDAHDVATSIRDISCQAHTLTQHIHTLAQQKTTLTQQEQSLCKELDILQREAGTIDTRTSAFNDLQIQLAHAKKTQELSQRYAELCAAHATCTAQCEKLEKIHAQKSAYSTRAREQLLQTKEQIHLQETRTHAVVLARLLEHQEPCPVCGSCIHPNPARQDIDNLEPLTRRMQRIEQTYAQLETSEKDVYHILTSERERRASYSAQMQEIQHSFSILTSCDTRSSCDIPNVQKITVRVLDLTEKLSRAKDMLACAQHALLRKKQPEQDLQDVRAHLQQCSQELAKKETALHALQETLTQQRVRIHALSIRLPKELLASNLLAPQKMQHEKESVAYWKEMLAHCQTLMRELHTHIEEYDREFNEIENASSALGADIAAREDALNHVQKEYMHLARTVCCARTEAHFNNNEEVTAALMTDAELSHAAAEIQFFNELRAADTHLLKTLEAEIGTEIPSDLDELNAQCHTLVKDEENFLSRIEILSATLHTLTHQYLKYEECSKQLAQKTQESAKLITLSDELNGINQKKIQFDAWALISFLHEITAYANIRLQKMSEGRYHLRVADSHVNARGYQGLALLVADAYTGSVRPSATLSGGETFMASISLALGLADSIQTRSGGIVLDSLFIDEGFGSLDEASLDKAIGILDEIREGSRMIGIISHVHELRTRIPHKILIKKTNAGSHVMQGDAE</sequence>
<comment type="function">
    <text evidence="1">SbcCD cleaves DNA hairpin structures. These structures can inhibit DNA replication and are intermediates in certain DNA recombination reactions. The complex acts as a 3'-&gt;5' double strand exonuclease that can open hairpins. It also has a 5' single-strand endonuclease activity (By similarity).</text>
</comment>
<comment type="subunit">
    <text evidence="1">Heterodimer of SbcC and SbcD.</text>
</comment>
<comment type="similarity">
    <text evidence="3">Belongs to the SMC family. SbcC subfamily.</text>
</comment>
<reference key="1">
    <citation type="journal article" date="1998" name="Science">
        <title>Complete genome sequence of Treponema pallidum, the syphilis spirochete.</title>
        <authorList>
            <person name="Fraser C.M."/>
            <person name="Norris S.J."/>
            <person name="Weinstock G.M."/>
            <person name="White O."/>
            <person name="Sutton G.G."/>
            <person name="Dodson R.J."/>
            <person name="Gwinn M.L."/>
            <person name="Hickey E.K."/>
            <person name="Clayton R.A."/>
            <person name="Ketchum K.A."/>
            <person name="Sodergren E."/>
            <person name="Hardham J.M."/>
            <person name="McLeod M.P."/>
            <person name="Salzberg S.L."/>
            <person name="Peterson J.D."/>
            <person name="Khalak H.G."/>
            <person name="Richardson D.L."/>
            <person name="Howell J.K."/>
            <person name="Chidambaram M."/>
            <person name="Utterback T.R."/>
            <person name="McDonald L.A."/>
            <person name="Artiach P."/>
            <person name="Bowman C."/>
            <person name="Cotton M.D."/>
            <person name="Fujii C."/>
            <person name="Garland S.A."/>
            <person name="Hatch B."/>
            <person name="Horst K."/>
            <person name="Roberts K.M."/>
            <person name="Sandusky M."/>
            <person name="Weidman J.F."/>
            <person name="Smith H.O."/>
            <person name="Venter J.C."/>
        </authorList>
    </citation>
    <scope>NUCLEOTIDE SEQUENCE [LARGE SCALE GENOMIC DNA]</scope>
    <source>
        <strain>Nichols</strain>
    </source>
</reference>
<accession>O83635</accession>
<evidence type="ECO:0000250" key="1"/>
<evidence type="ECO:0000255" key="2"/>
<evidence type="ECO:0000305" key="3"/>
<gene>
    <name type="primary">sbcC</name>
    <name type="ordered locus">TP_0627</name>
</gene>